<sequence>MPAVEKIGDNLRLRIFLQPKASKDHLIGLYDNALKISITAPPIDGQANAHLLKFLSKTFKVAKSQIILEKGELSRHKQILIPHPKSIPPVVANLLIETT</sequence>
<accession>Q0I525</accession>
<organism>
    <name type="scientific">Histophilus somni (strain 129Pt)</name>
    <name type="common">Haemophilus somnus</name>
    <dbReference type="NCBI Taxonomy" id="205914"/>
    <lineage>
        <taxon>Bacteria</taxon>
        <taxon>Pseudomonadati</taxon>
        <taxon>Pseudomonadota</taxon>
        <taxon>Gammaproteobacteria</taxon>
        <taxon>Pasteurellales</taxon>
        <taxon>Pasteurellaceae</taxon>
        <taxon>Histophilus</taxon>
    </lineage>
</organism>
<proteinExistence type="inferred from homology"/>
<comment type="similarity">
    <text evidence="1">Belongs to the UPF0235 family.</text>
</comment>
<protein>
    <recommendedName>
        <fullName evidence="1">UPF0235 protein HS_1657</fullName>
    </recommendedName>
</protein>
<reference key="1">
    <citation type="journal article" date="2007" name="J. Bacteriol.">
        <title>Complete genome sequence of Haemophilus somnus (Histophilus somni) strain 129Pt and comparison to Haemophilus ducreyi 35000HP and Haemophilus influenzae Rd.</title>
        <authorList>
            <person name="Challacombe J.F."/>
            <person name="Duncan A.J."/>
            <person name="Brettin T.S."/>
            <person name="Bruce D."/>
            <person name="Chertkov O."/>
            <person name="Detter J.C."/>
            <person name="Han C.S."/>
            <person name="Misra M."/>
            <person name="Richardson P."/>
            <person name="Tapia R."/>
            <person name="Thayer N."/>
            <person name="Xie G."/>
            <person name="Inzana T.J."/>
        </authorList>
    </citation>
    <scope>NUCLEOTIDE SEQUENCE [LARGE SCALE GENOMIC DNA]</scope>
    <source>
        <strain>129Pt</strain>
    </source>
</reference>
<gene>
    <name type="ordered locus">HS_1657</name>
</gene>
<dbReference type="EMBL" id="CP000436">
    <property type="protein sequence ID" value="ABI25925.1"/>
    <property type="molecule type" value="Genomic_DNA"/>
</dbReference>
<dbReference type="SMR" id="Q0I525"/>
<dbReference type="KEGG" id="hso:HS_1657"/>
<dbReference type="eggNOG" id="COG1872">
    <property type="taxonomic scope" value="Bacteria"/>
</dbReference>
<dbReference type="HOGENOM" id="CLU_130694_5_0_6"/>
<dbReference type="GO" id="GO:0005737">
    <property type="term" value="C:cytoplasm"/>
    <property type="evidence" value="ECO:0007669"/>
    <property type="project" value="TreeGrafter"/>
</dbReference>
<dbReference type="Gene3D" id="3.30.1200.10">
    <property type="entry name" value="YggU-like"/>
    <property type="match status" value="1"/>
</dbReference>
<dbReference type="HAMAP" id="MF_00634">
    <property type="entry name" value="UPF0235"/>
    <property type="match status" value="1"/>
</dbReference>
<dbReference type="InterPro" id="IPR003746">
    <property type="entry name" value="DUF167"/>
</dbReference>
<dbReference type="InterPro" id="IPR036591">
    <property type="entry name" value="YggU-like_sf"/>
</dbReference>
<dbReference type="NCBIfam" id="TIGR00251">
    <property type="entry name" value="DUF167 family protein"/>
    <property type="match status" value="1"/>
</dbReference>
<dbReference type="NCBIfam" id="NF003466">
    <property type="entry name" value="PRK05090.1"/>
    <property type="match status" value="1"/>
</dbReference>
<dbReference type="PANTHER" id="PTHR13420">
    <property type="entry name" value="UPF0235 PROTEIN C15ORF40"/>
    <property type="match status" value="1"/>
</dbReference>
<dbReference type="PANTHER" id="PTHR13420:SF7">
    <property type="entry name" value="UPF0235 PROTEIN C15ORF40"/>
    <property type="match status" value="1"/>
</dbReference>
<dbReference type="Pfam" id="PF02594">
    <property type="entry name" value="DUF167"/>
    <property type="match status" value="1"/>
</dbReference>
<dbReference type="SMART" id="SM01152">
    <property type="entry name" value="DUF167"/>
    <property type="match status" value="1"/>
</dbReference>
<dbReference type="SUPFAM" id="SSF69786">
    <property type="entry name" value="YggU-like"/>
    <property type="match status" value="1"/>
</dbReference>
<feature type="chain" id="PRO_1000130688" description="UPF0235 protein HS_1657">
    <location>
        <begin position="1"/>
        <end position="99"/>
    </location>
</feature>
<evidence type="ECO:0000255" key="1">
    <source>
        <dbReference type="HAMAP-Rule" id="MF_00634"/>
    </source>
</evidence>
<name>Y1657_HISS1</name>